<name>FOLD_MYCSK</name>
<dbReference type="EC" id="1.5.1.5" evidence="1"/>
<dbReference type="EC" id="3.5.4.9" evidence="1"/>
<dbReference type="EMBL" id="CP000518">
    <property type="protein sequence ID" value="ABL90433.1"/>
    <property type="molecule type" value="Genomic_DNA"/>
</dbReference>
<dbReference type="SMR" id="A1UC75"/>
<dbReference type="STRING" id="189918.Mkms_1221"/>
<dbReference type="KEGG" id="mkm:Mkms_1221"/>
<dbReference type="HOGENOM" id="CLU_034045_3_0_11"/>
<dbReference type="OrthoDB" id="9803580at2"/>
<dbReference type="UniPathway" id="UPA00193"/>
<dbReference type="GO" id="GO:0005829">
    <property type="term" value="C:cytosol"/>
    <property type="evidence" value="ECO:0007669"/>
    <property type="project" value="TreeGrafter"/>
</dbReference>
<dbReference type="GO" id="GO:0004477">
    <property type="term" value="F:methenyltetrahydrofolate cyclohydrolase activity"/>
    <property type="evidence" value="ECO:0007669"/>
    <property type="project" value="UniProtKB-UniRule"/>
</dbReference>
<dbReference type="GO" id="GO:0004488">
    <property type="term" value="F:methylenetetrahydrofolate dehydrogenase (NADP+) activity"/>
    <property type="evidence" value="ECO:0007669"/>
    <property type="project" value="UniProtKB-UniRule"/>
</dbReference>
<dbReference type="GO" id="GO:0000105">
    <property type="term" value="P:L-histidine biosynthetic process"/>
    <property type="evidence" value="ECO:0007669"/>
    <property type="project" value="UniProtKB-KW"/>
</dbReference>
<dbReference type="GO" id="GO:0009086">
    <property type="term" value="P:methionine biosynthetic process"/>
    <property type="evidence" value="ECO:0007669"/>
    <property type="project" value="UniProtKB-KW"/>
</dbReference>
<dbReference type="GO" id="GO:0006164">
    <property type="term" value="P:purine nucleotide biosynthetic process"/>
    <property type="evidence" value="ECO:0007669"/>
    <property type="project" value="UniProtKB-KW"/>
</dbReference>
<dbReference type="GO" id="GO:0035999">
    <property type="term" value="P:tetrahydrofolate interconversion"/>
    <property type="evidence" value="ECO:0007669"/>
    <property type="project" value="UniProtKB-UniRule"/>
</dbReference>
<dbReference type="CDD" id="cd01080">
    <property type="entry name" value="NAD_bind_m-THF_DH_Cyclohyd"/>
    <property type="match status" value="1"/>
</dbReference>
<dbReference type="FunFam" id="3.40.50.720:FF:000094">
    <property type="entry name" value="Bifunctional protein FolD"/>
    <property type="match status" value="1"/>
</dbReference>
<dbReference type="FunFam" id="3.40.50.10860:FF:000005">
    <property type="entry name" value="C-1-tetrahydrofolate synthase, cytoplasmic, putative"/>
    <property type="match status" value="1"/>
</dbReference>
<dbReference type="Gene3D" id="3.40.50.10860">
    <property type="entry name" value="Leucine Dehydrogenase, chain A, domain 1"/>
    <property type="match status" value="1"/>
</dbReference>
<dbReference type="Gene3D" id="3.40.50.720">
    <property type="entry name" value="NAD(P)-binding Rossmann-like Domain"/>
    <property type="match status" value="1"/>
</dbReference>
<dbReference type="HAMAP" id="MF_01576">
    <property type="entry name" value="THF_DHG_CYH"/>
    <property type="match status" value="1"/>
</dbReference>
<dbReference type="InterPro" id="IPR046346">
    <property type="entry name" value="Aminoacid_DH-like_N_sf"/>
</dbReference>
<dbReference type="InterPro" id="IPR036291">
    <property type="entry name" value="NAD(P)-bd_dom_sf"/>
</dbReference>
<dbReference type="InterPro" id="IPR000672">
    <property type="entry name" value="THF_DH/CycHdrlase"/>
</dbReference>
<dbReference type="InterPro" id="IPR020630">
    <property type="entry name" value="THF_DH/CycHdrlase_cat_dom"/>
</dbReference>
<dbReference type="InterPro" id="IPR020631">
    <property type="entry name" value="THF_DH/CycHdrlase_NAD-bd_dom"/>
</dbReference>
<dbReference type="NCBIfam" id="NF010789">
    <property type="entry name" value="PRK14193.1"/>
    <property type="match status" value="1"/>
</dbReference>
<dbReference type="PANTHER" id="PTHR48099:SF5">
    <property type="entry name" value="C-1-TETRAHYDROFOLATE SYNTHASE, CYTOPLASMIC"/>
    <property type="match status" value="1"/>
</dbReference>
<dbReference type="PANTHER" id="PTHR48099">
    <property type="entry name" value="C-1-TETRAHYDROFOLATE SYNTHASE, CYTOPLASMIC-RELATED"/>
    <property type="match status" value="1"/>
</dbReference>
<dbReference type="Pfam" id="PF00763">
    <property type="entry name" value="THF_DHG_CYH"/>
    <property type="match status" value="1"/>
</dbReference>
<dbReference type="Pfam" id="PF02882">
    <property type="entry name" value="THF_DHG_CYH_C"/>
    <property type="match status" value="1"/>
</dbReference>
<dbReference type="PRINTS" id="PR00085">
    <property type="entry name" value="THFDHDRGNASE"/>
</dbReference>
<dbReference type="SUPFAM" id="SSF53223">
    <property type="entry name" value="Aminoacid dehydrogenase-like, N-terminal domain"/>
    <property type="match status" value="1"/>
</dbReference>
<dbReference type="SUPFAM" id="SSF51735">
    <property type="entry name" value="NAD(P)-binding Rossmann-fold domains"/>
    <property type="match status" value="1"/>
</dbReference>
<proteinExistence type="inferred from homology"/>
<reference key="1">
    <citation type="submission" date="2006-12" db="EMBL/GenBank/DDBJ databases">
        <title>Complete sequence of chromosome of Mycobacterium sp. KMS.</title>
        <authorList>
            <consortium name="US DOE Joint Genome Institute"/>
            <person name="Copeland A."/>
            <person name="Lucas S."/>
            <person name="Lapidus A."/>
            <person name="Barry K."/>
            <person name="Detter J.C."/>
            <person name="Glavina del Rio T."/>
            <person name="Hammon N."/>
            <person name="Israni S."/>
            <person name="Dalin E."/>
            <person name="Tice H."/>
            <person name="Pitluck S."/>
            <person name="Kiss H."/>
            <person name="Brettin T."/>
            <person name="Bruce D."/>
            <person name="Han C."/>
            <person name="Tapia R."/>
            <person name="Gilna P."/>
            <person name="Schmutz J."/>
            <person name="Larimer F."/>
            <person name="Land M."/>
            <person name="Hauser L."/>
            <person name="Kyrpides N."/>
            <person name="Mikhailova N."/>
            <person name="Miller C.D."/>
            <person name="Richardson P."/>
        </authorList>
    </citation>
    <scope>NUCLEOTIDE SEQUENCE [LARGE SCALE GENOMIC DNA]</scope>
    <source>
        <strain>KMS</strain>
    </source>
</reference>
<gene>
    <name evidence="1" type="primary">folD</name>
    <name type="ordered locus">Mkms_1221</name>
</gene>
<keyword id="KW-0028">Amino-acid biosynthesis</keyword>
<keyword id="KW-0368">Histidine biosynthesis</keyword>
<keyword id="KW-0378">Hydrolase</keyword>
<keyword id="KW-0486">Methionine biosynthesis</keyword>
<keyword id="KW-0511">Multifunctional enzyme</keyword>
<keyword id="KW-0521">NADP</keyword>
<keyword id="KW-0554">One-carbon metabolism</keyword>
<keyword id="KW-0560">Oxidoreductase</keyword>
<keyword id="KW-0658">Purine biosynthesis</keyword>
<organism>
    <name type="scientific">Mycobacterium sp. (strain KMS)</name>
    <dbReference type="NCBI Taxonomy" id="189918"/>
    <lineage>
        <taxon>Bacteria</taxon>
        <taxon>Bacillati</taxon>
        <taxon>Actinomycetota</taxon>
        <taxon>Actinomycetes</taxon>
        <taxon>Mycobacteriales</taxon>
        <taxon>Mycobacteriaceae</taxon>
        <taxon>Mycobacterium</taxon>
    </lineage>
</organism>
<feature type="chain" id="PRO_0000305846" description="Bifunctional protein FolD">
    <location>
        <begin position="1"/>
        <end position="288"/>
    </location>
</feature>
<feature type="binding site" evidence="1">
    <location>
        <begin position="168"/>
        <end position="170"/>
    </location>
    <ligand>
        <name>NADP(+)</name>
        <dbReference type="ChEBI" id="CHEBI:58349"/>
    </ligand>
</feature>
<feature type="binding site" evidence="1">
    <location>
        <position position="195"/>
    </location>
    <ligand>
        <name>NADP(+)</name>
        <dbReference type="ChEBI" id="CHEBI:58349"/>
    </ligand>
</feature>
<feature type="binding site" evidence="1">
    <location>
        <position position="236"/>
    </location>
    <ligand>
        <name>NADP(+)</name>
        <dbReference type="ChEBI" id="CHEBI:58349"/>
    </ligand>
</feature>
<comment type="function">
    <text evidence="1">Catalyzes the oxidation of 5,10-methylenetetrahydrofolate to 5,10-methenyltetrahydrofolate and then the hydrolysis of 5,10-methenyltetrahydrofolate to 10-formyltetrahydrofolate.</text>
</comment>
<comment type="catalytic activity">
    <reaction evidence="1">
        <text>(6R)-5,10-methylene-5,6,7,8-tetrahydrofolate + NADP(+) = (6R)-5,10-methenyltetrahydrofolate + NADPH</text>
        <dbReference type="Rhea" id="RHEA:22812"/>
        <dbReference type="ChEBI" id="CHEBI:15636"/>
        <dbReference type="ChEBI" id="CHEBI:57455"/>
        <dbReference type="ChEBI" id="CHEBI:57783"/>
        <dbReference type="ChEBI" id="CHEBI:58349"/>
        <dbReference type="EC" id="1.5.1.5"/>
    </reaction>
</comment>
<comment type="catalytic activity">
    <reaction evidence="1">
        <text>(6R)-5,10-methenyltetrahydrofolate + H2O = (6R)-10-formyltetrahydrofolate + H(+)</text>
        <dbReference type="Rhea" id="RHEA:23700"/>
        <dbReference type="ChEBI" id="CHEBI:15377"/>
        <dbReference type="ChEBI" id="CHEBI:15378"/>
        <dbReference type="ChEBI" id="CHEBI:57455"/>
        <dbReference type="ChEBI" id="CHEBI:195366"/>
        <dbReference type="EC" id="3.5.4.9"/>
    </reaction>
</comment>
<comment type="pathway">
    <text evidence="1">One-carbon metabolism; tetrahydrofolate interconversion.</text>
</comment>
<comment type="subunit">
    <text evidence="1">Homodimer.</text>
</comment>
<comment type="similarity">
    <text evidence="1">Belongs to the tetrahydrofolate dehydrogenase/cyclohydrolase family.</text>
</comment>
<sequence length="288" mass="30414">MSGVGAITLDGKATRDEIFVDLKERVAALTEQGRTPGLGTVLVGDDPGSQAYVRGKHSDCAKVGINSIRRDLPADISQAELDATIDELNANPECTGYIVQLPLPKHLDENAALERIDPGKDADGLHPTNLGRLVLNEPAPLPCTPRGIVHLLRRYEVEIAGAHVVVIGRGVTVGRPLGLLLTRRSENATVTLCHTATRHLPQFTREADIIVAAAGVPHMVTAEMVRPGAAVIDVGVSRDDNGKLVGDVAPDVWEVAGHVSPNPGGVGPLTRAFLLTNVVERAEALARG</sequence>
<accession>A1UC75</accession>
<protein>
    <recommendedName>
        <fullName evidence="1">Bifunctional protein FolD</fullName>
    </recommendedName>
    <domain>
        <recommendedName>
            <fullName evidence="1">Methylenetetrahydrofolate dehydrogenase</fullName>
            <ecNumber evidence="1">1.5.1.5</ecNumber>
        </recommendedName>
    </domain>
    <domain>
        <recommendedName>
            <fullName evidence="1">Methenyltetrahydrofolate cyclohydrolase</fullName>
            <ecNumber evidence="1">3.5.4.9</ecNumber>
        </recommendedName>
    </domain>
</protein>
<evidence type="ECO:0000255" key="1">
    <source>
        <dbReference type="HAMAP-Rule" id="MF_01576"/>
    </source>
</evidence>